<organism>
    <name type="scientific">Xenopus laevis</name>
    <name type="common">African clawed frog</name>
    <dbReference type="NCBI Taxonomy" id="8355"/>
    <lineage>
        <taxon>Eukaryota</taxon>
        <taxon>Metazoa</taxon>
        <taxon>Chordata</taxon>
        <taxon>Craniata</taxon>
        <taxon>Vertebrata</taxon>
        <taxon>Euteleostomi</taxon>
        <taxon>Amphibia</taxon>
        <taxon>Batrachia</taxon>
        <taxon>Anura</taxon>
        <taxon>Pipoidea</taxon>
        <taxon>Pipidae</taxon>
        <taxon>Xenopodinae</taxon>
        <taxon>Xenopus</taxon>
        <taxon>Xenopus</taxon>
    </lineage>
</organism>
<gene>
    <name type="primary">gsc-b</name>
</gene>
<keyword id="KW-0217">Developmental protein</keyword>
<keyword id="KW-0238">DNA-binding</keyword>
<keyword id="KW-0371">Homeobox</keyword>
<keyword id="KW-0539">Nucleus</keyword>
<keyword id="KW-1185">Reference proteome</keyword>
<proteinExistence type="evidence at transcript level"/>
<evidence type="ECO:0000255" key="1">
    <source>
        <dbReference type="PROSITE-ProRule" id="PRU00108"/>
    </source>
</evidence>
<evidence type="ECO:0000256" key="2">
    <source>
        <dbReference type="SAM" id="MobiDB-lite"/>
    </source>
</evidence>
<evidence type="ECO:0000269" key="3">
    <source>
    </source>
</evidence>
<evidence type="ECO:0000269" key="4">
    <source>
    </source>
</evidence>
<evidence type="ECO:0000269" key="5">
    <source>
    </source>
</evidence>
<evidence type="ECO:0000305" key="6"/>
<sequence>MPSGMFSIDNILAARPRCKESLLLPQNGPLLFSSLGESLYGPADYSGFYNRTVAPTSALQGVNGSRLGYNNYYYGQLHLQTPVGPSCCGAVQALGTQQCSCVPSATAYDGAGSVLIPPVPHQMLPYMNVGTLSRTELQLLNQLHCRRKRRHRTIFTDEQLEALENLFQETKYPDVGTREQLARRVHLREEKVEVWFKNRRAKWRRQKRSSSEESENAQKWNKSSKNSAEKRDEQAKSDLDSDS</sequence>
<feature type="chain" id="PRO_0000048890" description="Homeobox protein goosecoid isoform B">
    <location>
        <begin position="1"/>
        <end position="243"/>
    </location>
</feature>
<feature type="DNA-binding region" description="Homeobox" evidence="1">
    <location>
        <begin position="148"/>
        <end position="207"/>
    </location>
</feature>
<feature type="region of interest" description="Disordered" evidence="2">
    <location>
        <begin position="201"/>
        <end position="243"/>
    </location>
</feature>
<feature type="compositionally biased region" description="Polar residues" evidence="2">
    <location>
        <begin position="217"/>
        <end position="226"/>
    </location>
</feature>
<feature type="compositionally biased region" description="Basic and acidic residues" evidence="2">
    <location>
        <begin position="227"/>
        <end position="243"/>
    </location>
</feature>
<dbReference type="EMBL" id="M81481">
    <property type="protein sequence ID" value="AAA49729.1"/>
    <property type="molecule type" value="mRNA"/>
</dbReference>
<dbReference type="EMBL" id="BC079970">
    <property type="protein sequence ID" value="AAH79970.1"/>
    <property type="molecule type" value="mRNA"/>
</dbReference>
<dbReference type="PIR" id="I51424">
    <property type="entry name" value="I51424"/>
</dbReference>
<dbReference type="RefSeq" id="NP_001081278.1">
    <property type="nucleotide sequence ID" value="NM_001087809.1"/>
</dbReference>
<dbReference type="SMR" id="P53546"/>
<dbReference type="DNASU" id="397748"/>
<dbReference type="GeneID" id="397748"/>
<dbReference type="KEGG" id="xla:397748"/>
<dbReference type="AGR" id="Xenbase:XB-GENE-864870"/>
<dbReference type="CTD" id="397748"/>
<dbReference type="Xenbase" id="XB-GENE-864870">
    <property type="gene designation" value="gsc.S"/>
</dbReference>
<dbReference type="OrthoDB" id="6159439at2759"/>
<dbReference type="Proteomes" id="UP000186698">
    <property type="component" value="Chromosome 8S"/>
</dbReference>
<dbReference type="Bgee" id="397748">
    <property type="expression patterns" value="Expressed in oocyte and 8 other cell types or tissues"/>
</dbReference>
<dbReference type="GO" id="GO:0005634">
    <property type="term" value="C:nucleus"/>
    <property type="evidence" value="ECO:0000318"/>
    <property type="project" value="GO_Central"/>
</dbReference>
<dbReference type="GO" id="GO:0000981">
    <property type="term" value="F:DNA-binding transcription factor activity, RNA polymerase II-specific"/>
    <property type="evidence" value="ECO:0000318"/>
    <property type="project" value="GO_Central"/>
</dbReference>
<dbReference type="GO" id="GO:0000978">
    <property type="term" value="F:RNA polymerase II cis-regulatory region sequence-specific DNA binding"/>
    <property type="evidence" value="ECO:0000318"/>
    <property type="project" value="GO_Central"/>
</dbReference>
<dbReference type="GO" id="GO:0006357">
    <property type="term" value="P:regulation of transcription by RNA polymerase II"/>
    <property type="evidence" value="ECO:0000318"/>
    <property type="project" value="GO_Central"/>
</dbReference>
<dbReference type="CDD" id="cd00086">
    <property type="entry name" value="homeodomain"/>
    <property type="match status" value="1"/>
</dbReference>
<dbReference type="FunFam" id="1.10.10.60:FF:000210">
    <property type="entry name" value="homeobox protein goosecoid"/>
    <property type="match status" value="1"/>
</dbReference>
<dbReference type="Gene3D" id="1.10.10.60">
    <property type="entry name" value="Homeodomain-like"/>
    <property type="match status" value="1"/>
</dbReference>
<dbReference type="InterPro" id="IPR051440">
    <property type="entry name" value="Goosecoid-like_HB"/>
</dbReference>
<dbReference type="InterPro" id="IPR001356">
    <property type="entry name" value="HD"/>
</dbReference>
<dbReference type="InterPro" id="IPR017970">
    <property type="entry name" value="Homeobox_CS"/>
</dbReference>
<dbReference type="InterPro" id="IPR009057">
    <property type="entry name" value="Homeodomain-like_sf"/>
</dbReference>
<dbReference type="PANTHER" id="PTHR46643:SF2">
    <property type="entry name" value="HOMEOBOX PROTEIN GOOSECOID"/>
    <property type="match status" value="1"/>
</dbReference>
<dbReference type="PANTHER" id="PTHR46643">
    <property type="entry name" value="HOMEOBOX PROTEIN GOOSECOID-RELATED"/>
    <property type="match status" value="1"/>
</dbReference>
<dbReference type="Pfam" id="PF00046">
    <property type="entry name" value="Homeodomain"/>
    <property type="match status" value="1"/>
</dbReference>
<dbReference type="SMART" id="SM00389">
    <property type="entry name" value="HOX"/>
    <property type="match status" value="1"/>
</dbReference>
<dbReference type="SUPFAM" id="SSF46689">
    <property type="entry name" value="Homeodomain-like"/>
    <property type="match status" value="1"/>
</dbReference>
<dbReference type="PROSITE" id="PS00027">
    <property type="entry name" value="HOMEOBOX_1"/>
    <property type="match status" value="1"/>
</dbReference>
<dbReference type="PROSITE" id="PS50071">
    <property type="entry name" value="HOMEOBOX_2"/>
    <property type="match status" value="1"/>
</dbReference>
<name>GSCB_XENLA</name>
<reference key="1">
    <citation type="journal article" date="1991" name="Cell">
        <title>Molecular nature of Spemann's organizer: the role of the Xenopus homeobox gene goosecoid.</title>
        <authorList>
            <person name="Cho K.W.Y."/>
            <person name="Blumberg B."/>
            <person name="Steinbeisser H."/>
            <person name="De Robertis E.M."/>
        </authorList>
    </citation>
    <scope>NUCLEOTIDE SEQUENCE [MRNA]</scope>
    <scope>FUNCTION</scope>
    <scope>TISSUE SPECIFICITY</scope>
    <scope>INDUCTION</scope>
    <source>
        <tissue>Gastrula</tissue>
    </source>
</reference>
<reference key="2">
    <citation type="submission" date="2004-08" db="EMBL/GenBank/DDBJ databases">
        <authorList>
            <consortium name="NIH - Xenopus Gene Collection (XGC) project"/>
        </authorList>
    </citation>
    <scope>NUCLEOTIDE SEQUENCE [LARGE SCALE MRNA]</scope>
    <source>
        <tissue>Embryo</tissue>
    </source>
</reference>
<reference key="3">
    <citation type="journal article" date="1997" name="Development">
        <title>Functional differences among Xenopus nodal-related genes in left-right axis determination.</title>
        <authorList>
            <person name="Sampath K."/>
            <person name="Cheng A.M.S."/>
            <person name="Frisch A."/>
            <person name="Wright C.V.E."/>
        </authorList>
    </citation>
    <scope>INDUCTION</scope>
</reference>
<reference key="4">
    <citation type="journal article" date="1999" name="Development">
        <title>derriere: a TGF-beta family member required for posterior development in Xenopus.</title>
        <authorList>
            <person name="Sun B.I."/>
            <person name="Bush S.M."/>
            <person name="Collins-Racie L.A."/>
            <person name="LaVallie E.R."/>
            <person name="DiBlasio-Smith E.A."/>
            <person name="Wolfman N.M."/>
            <person name="McCoy J.M."/>
            <person name="Sive H.L."/>
        </authorList>
    </citation>
    <scope>INDUCTION</scope>
</reference>
<accession>P53546</accession>
<accession>Q68F73</accession>
<protein>
    <recommendedName>
        <fullName>Homeobox protein goosecoid isoform B</fullName>
    </recommendedName>
</protein>
<comment type="function">
    <text evidence="4">Plays a central role in executing Spemann's organizer phenomenon (the dorsal blastopore lip of the early Xenopus laevis gastrula can organize a complete secondary body axis when transplanted to another embryo).</text>
</comment>
<comment type="subcellular location">
    <subcellularLocation>
        <location>Nucleus</location>
    </subcellularLocation>
</comment>
<comment type="induction">
    <text evidence="3 4 5">Induced by activin (even in the absence of protein synthesis), lithium chloride, nodal/nr-1, nodal2/nr-2 and derriere. Not affected by basic fibroblast growth factor, and repressed by retinoic acid, and by UV light.</text>
</comment>
<comment type="similarity">
    <text evidence="6">Belongs to the paired homeobox family. Bicoid subfamily.</text>
</comment>